<dbReference type="EC" id="2.7.4.9" evidence="1"/>
<dbReference type="EMBL" id="CP000716">
    <property type="protein sequence ID" value="ABR30788.1"/>
    <property type="molecule type" value="Genomic_DNA"/>
</dbReference>
<dbReference type="RefSeq" id="WP_012057149.1">
    <property type="nucleotide sequence ID" value="NC_009616.1"/>
</dbReference>
<dbReference type="SMR" id="A6LLI7"/>
<dbReference type="STRING" id="391009.Tmel_0927"/>
<dbReference type="KEGG" id="tme:Tmel_0927"/>
<dbReference type="eggNOG" id="COG0125">
    <property type="taxonomic scope" value="Bacteria"/>
</dbReference>
<dbReference type="HOGENOM" id="CLU_049131_0_2_0"/>
<dbReference type="OrthoDB" id="9774907at2"/>
<dbReference type="Proteomes" id="UP000001110">
    <property type="component" value="Chromosome"/>
</dbReference>
<dbReference type="GO" id="GO:0005829">
    <property type="term" value="C:cytosol"/>
    <property type="evidence" value="ECO:0007669"/>
    <property type="project" value="TreeGrafter"/>
</dbReference>
<dbReference type="GO" id="GO:0005524">
    <property type="term" value="F:ATP binding"/>
    <property type="evidence" value="ECO:0007669"/>
    <property type="project" value="UniProtKB-UniRule"/>
</dbReference>
<dbReference type="GO" id="GO:0004798">
    <property type="term" value="F:dTMP kinase activity"/>
    <property type="evidence" value="ECO:0007669"/>
    <property type="project" value="UniProtKB-UniRule"/>
</dbReference>
<dbReference type="GO" id="GO:0006233">
    <property type="term" value="P:dTDP biosynthetic process"/>
    <property type="evidence" value="ECO:0007669"/>
    <property type="project" value="InterPro"/>
</dbReference>
<dbReference type="GO" id="GO:0006235">
    <property type="term" value="P:dTTP biosynthetic process"/>
    <property type="evidence" value="ECO:0007669"/>
    <property type="project" value="UniProtKB-UniRule"/>
</dbReference>
<dbReference type="GO" id="GO:0006227">
    <property type="term" value="P:dUDP biosynthetic process"/>
    <property type="evidence" value="ECO:0007669"/>
    <property type="project" value="TreeGrafter"/>
</dbReference>
<dbReference type="CDD" id="cd01672">
    <property type="entry name" value="TMPK"/>
    <property type="match status" value="1"/>
</dbReference>
<dbReference type="FunFam" id="3.40.50.300:FF:000225">
    <property type="entry name" value="Thymidylate kinase"/>
    <property type="match status" value="1"/>
</dbReference>
<dbReference type="Gene3D" id="3.40.50.300">
    <property type="entry name" value="P-loop containing nucleotide triphosphate hydrolases"/>
    <property type="match status" value="1"/>
</dbReference>
<dbReference type="HAMAP" id="MF_00165">
    <property type="entry name" value="Thymidylate_kinase"/>
    <property type="match status" value="1"/>
</dbReference>
<dbReference type="InterPro" id="IPR027417">
    <property type="entry name" value="P-loop_NTPase"/>
</dbReference>
<dbReference type="InterPro" id="IPR039430">
    <property type="entry name" value="Thymidylate_kin-like_dom"/>
</dbReference>
<dbReference type="InterPro" id="IPR018094">
    <property type="entry name" value="Thymidylate_kinase"/>
</dbReference>
<dbReference type="NCBIfam" id="TIGR00041">
    <property type="entry name" value="DTMP_kinase"/>
    <property type="match status" value="1"/>
</dbReference>
<dbReference type="PANTHER" id="PTHR10344">
    <property type="entry name" value="THYMIDYLATE KINASE"/>
    <property type="match status" value="1"/>
</dbReference>
<dbReference type="PANTHER" id="PTHR10344:SF4">
    <property type="entry name" value="UMP-CMP KINASE 2, MITOCHONDRIAL"/>
    <property type="match status" value="1"/>
</dbReference>
<dbReference type="Pfam" id="PF02223">
    <property type="entry name" value="Thymidylate_kin"/>
    <property type="match status" value="1"/>
</dbReference>
<dbReference type="SUPFAM" id="SSF52540">
    <property type="entry name" value="P-loop containing nucleoside triphosphate hydrolases"/>
    <property type="match status" value="1"/>
</dbReference>
<evidence type="ECO:0000255" key="1">
    <source>
        <dbReference type="HAMAP-Rule" id="MF_00165"/>
    </source>
</evidence>
<accession>A6LLI7</accession>
<sequence length="199" mass="22868">MFIAFEGIDGSGKSTQLVLLEKYLINRGKKVIKVREPGGTILGEKIRDLLLNFNMNKRSELLLFLASRAQLVEEVIRPSIEKGYFVLADRFSDSSIAYQGGARNLGKDLVEKLNIFATNGIFPDIVFFIDIPVQMAVRRMKEKEKDRIEKEGEDFLEKVRTTYLHIAKSRKNFFVIDGTKDVDYVFSQIKRIIDTMLDH</sequence>
<reference key="1">
    <citation type="submission" date="2007-05" db="EMBL/GenBank/DDBJ databases">
        <title>Complete sequence of Thermosipho melanesiensis BI429.</title>
        <authorList>
            <consortium name="US DOE Joint Genome Institute"/>
            <person name="Copeland A."/>
            <person name="Lucas S."/>
            <person name="Lapidus A."/>
            <person name="Barry K."/>
            <person name="Glavina del Rio T."/>
            <person name="Dalin E."/>
            <person name="Tice H."/>
            <person name="Pitluck S."/>
            <person name="Chertkov O."/>
            <person name="Brettin T."/>
            <person name="Bruce D."/>
            <person name="Detter J.C."/>
            <person name="Han C."/>
            <person name="Schmutz J."/>
            <person name="Larimer F."/>
            <person name="Land M."/>
            <person name="Hauser L."/>
            <person name="Kyrpides N."/>
            <person name="Mikhailova N."/>
            <person name="Nelson K."/>
            <person name="Gogarten J.P."/>
            <person name="Noll K."/>
            <person name="Richardson P."/>
        </authorList>
    </citation>
    <scope>NUCLEOTIDE SEQUENCE [LARGE SCALE GENOMIC DNA]</scope>
    <source>
        <strain>DSM 12029 / CIP 104789 / BI429</strain>
    </source>
</reference>
<organism>
    <name type="scientific">Thermosipho melanesiensis (strain DSM 12029 / CIP 104789 / BI429)</name>
    <dbReference type="NCBI Taxonomy" id="391009"/>
    <lineage>
        <taxon>Bacteria</taxon>
        <taxon>Thermotogati</taxon>
        <taxon>Thermotogota</taxon>
        <taxon>Thermotogae</taxon>
        <taxon>Thermotogales</taxon>
        <taxon>Fervidobacteriaceae</taxon>
        <taxon>Thermosipho</taxon>
    </lineage>
</organism>
<name>KTHY_THEM4</name>
<keyword id="KW-0067">ATP-binding</keyword>
<keyword id="KW-0418">Kinase</keyword>
<keyword id="KW-0545">Nucleotide biosynthesis</keyword>
<keyword id="KW-0547">Nucleotide-binding</keyword>
<keyword id="KW-0808">Transferase</keyword>
<comment type="function">
    <text evidence="1">Phosphorylation of dTMP to form dTDP in both de novo and salvage pathways of dTTP synthesis.</text>
</comment>
<comment type="catalytic activity">
    <reaction evidence="1">
        <text>dTMP + ATP = dTDP + ADP</text>
        <dbReference type="Rhea" id="RHEA:13517"/>
        <dbReference type="ChEBI" id="CHEBI:30616"/>
        <dbReference type="ChEBI" id="CHEBI:58369"/>
        <dbReference type="ChEBI" id="CHEBI:63528"/>
        <dbReference type="ChEBI" id="CHEBI:456216"/>
        <dbReference type="EC" id="2.7.4.9"/>
    </reaction>
</comment>
<comment type="similarity">
    <text evidence="1">Belongs to the thymidylate kinase family.</text>
</comment>
<proteinExistence type="inferred from homology"/>
<protein>
    <recommendedName>
        <fullName evidence="1">Thymidylate kinase</fullName>
        <ecNumber evidence="1">2.7.4.9</ecNumber>
    </recommendedName>
    <alternativeName>
        <fullName evidence="1">dTMP kinase</fullName>
    </alternativeName>
</protein>
<gene>
    <name evidence="1" type="primary">tmk</name>
    <name type="ordered locus">Tmel_0927</name>
</gene>
<feature type="chain" id="PRO_1000023305" description="Thymidylate kinase">
    <location>
        <begin position="1"/>
        <end position="199"/>
    </location>
</feature>
<feature type="binding site" evidence="1">
    <location>
        <begin position="7"/>
        <end position="14"/>
    </location>
    <ligand>
        <name>ATP</name>
        <dbReference type="ChEBI" id="CHEBI:30616"/>
    </ligand>
</feature>